<keyword id="KW-0007">Acetylation</keyword>
<keyword id="KW-0067">ATP-binding</keyword>
<keyword id="KW-0106">Calcium</keyword>
<keyword id="KW-0112">Calmodulin-binding</keyword>
<keyword id="KW-0418">Kinase</keyword>
<keyword id="KW-0547">Nucleotide-binding</keyword>
<keyword id="KW-0597">Phosphoprotein</keyword>
<keyword id="KW-1185">Reference proteome</keyword>
<keyword id="KW-0723">Serine/threonine-protein kinase</keyword>
<keyword id="KW-0808">Transferase</keyword>
<name>EF2K_RAT</name>
<gene>
    <name evidence="10" type="primary">Eef2k</name>
</gene>
<comment type="function">
    <text evidence="1">Threonine kinase that regulates protein synthesis by controlling the rate of peptide chain elongation. Upon activation by a variety of upstream kinases including AMPK or TRPM7, phosphorylates the elongation factor EEF2 at a single site, renders it unable to bind ribosomes and thus inactive. In turn, the rate of protein synthesis is reduced (By similarity).</text>
</comment>
<comment type="catalytic activity">
    <reaction evidence="8">
        <text>[translation elongation factor 2] + ATP = [translation elongation factor 2]-phosphate + ADP + H(+)</text>
        <dbReference type="Rhea" id="RHEA:21436"/>
        <dbReference type="Rhea" id="RHEA-COMP:11268"/>
        <dbReference type="Rhea" id="RHEA-COMP:11269"/>
        <dbReference type="ChEBI" id="CHEBI:15378"/>
        <dbReference type="ChEBI" id="CHEBI:30616"/>
        <dbReference type="ChEBI" id="CHEBI:43176"/>
        <dbReference type="ChEBI" id="CHEBI:68546"/>
        <dbReference type="ChEBI" id="CHEBI:456216"/>
        <dbReference type="EC" id="2.7.11.20"/>
    </reaction>
    <physiologicalReaction direction="left-to-right" evidence="8">
        <dbReference type="Rhea" id="RHEA:21437"/>
    </physiologicalReaction>
</comment>
<comment type="activity regulation">
    <text evidence="8">Undergoes calcium/calmodulin-dependent intramolecular autophosphorylation, and this results in it becoming partially calcium/calmodulin-independent.</text>
</comment>
<comment type="subunit">
    <text evidence="2 9">Monomer or homodimer (Probable). Interacts with Calmodulin/CALM1; this interaction is strictly required for phosphorylation activity (By similarity).</text>
</comment>
<comment type="tissue specificity">
    <text evidence="7">Widely expressed, with high levels in reticulocytes and skeletal muscle.</text>
</comment>
<comment type="PTM">
    <text>The N-terminus is blocked.</text>
</comment>
<comment type="PTM">
    <text evidence="1">Autophosphorylated at multiple residues, Thr-347 being the major site. Phosphorylated by AMP-activated protein kinase AMPK at Ser-397 leading to EEF2K activation and protein synthesis inhibition. Phosphorylated by TRPM7 at Ser-77 resulting in improved protein stability, higher EE2F phosphorylated and subsequently reduced rate of protein synthesis. Phosphorylation by other kinases such as CDK1 and MAPK13 at Ser-358 or RPS6KA1 and RPS6KB1 at Ser-365 instead decrease EEF2K activity and promote protein synthesis (By similarity).</text>
</comment>
<comment type="similarity">
    <text evidence="9">Belongs to the protein kinase superfamily. Alpha-type protein kinase family.</text>
</comment>
<feature type="initiator methionine" description="Removed" evidence="2">
    <location>
        <position position="1"/>
    </location>
</feature>
<feature type="chain" id="PRO_0000086938" description="Eukaryotic elongation factor 2 kinase">
    <location>
        <begin position="2"/>
        <end position="724"/>
    </location>
</feature>
<feature type="domain" description="Alpha-type protein kinase" evidence="4">
    <location>
        <begin position="115"/>
        <end position="325"/>
    </location>
</feature>
<feature type="region of interest" description="Disordered" evidence="5">
    <location>
        <begin position="11"/>
        <end position="35"/>
    </location>
</feature>
<feature type="region of interest" description="Calmodulin-binding" evidence="2">
    <location>
        <begin position="80"/>
        <end position="93"/>
    </location>
</feature>
<feature type="region of interest" description="Disordered" evidence="5">
    <location>
        <begin position="353"/>
        <end position="476"/>
    </location>
</feature>
<feature type="compositionally biased region" description="Gly residues" evidence="5">
    <location>
        <begin position="13"/>
        <end position="22"/>
    </location>
</feature>
<feature type="compositionally biased region" description="Low complexity" evidence="5">
    <location>
        <begin position="364"/>
        <end position="376"/>
    </location>
</feature>
<feature type="compositionally biased region" description="Polar residues" evidence="5">
    <location>
        <begin position="385"/>
        <end position="403"/>
    </location>
</feature>
<feature type="compositionally biased region" description="Basic and acidic residues" evidence="5">
    <location>
        <begin position="421"/>
        <end position="435"/>
    </location>
</feature>
<feature type="compositionally biased region" description="Basic and acidic residues" evidence="5">
    <location>
        <begin position="444"/>
        <end position="468"/>
    </location>
</feature>
<feature type="binding site" evidence="1">
    <location>
        <begin position="295"/>
        <end position="301"/>
    </location>
    <ligand>
        <name>ATP</name>
        <dbReference type="ChEBI" id="CHEBI:30616"/>
    </ligand>
</feature>
<feature type="modified residue" description="N-acetylalanine" evidence="2">
    <location>
        <position position="2"/>
    </location>
</feature>
<feature type="modified residue" description="Phosphoserine" evidence="2">
    <location>
        <position position="18"/>
    </location>
</feature>
<feature type="modified residue" description="Phosphoserine" evidence="2">
    <location>
        <position position="27"/>
    </location>
</feature>
<feature type="modified residue" description="Phosphoserine" evidence="3">
    <location>
        <position position="70"/>
    </location>
</feature>
<feature type="modified residue" description="Phosphoserine" evidence="11">
    <location>
        <position position="73"/>
    </location>
</feature>
<feature type="modified residue" description="Phosphoserine; by autocatalysis and TRPM7" evidence="2">
    <location>
        <position position="77"/>
    </location>
</feature>
<feature type="modified residue" description="Phosphoserine" evidence="2">
    <location>
        <position position="242"/>
    </location>
</feature>
<feature type="modified residue" description="Phosphothreonine" evidence="11">
    <location>
        <position position="347"/>
    </location>
</feature>
<feature type="modified residue" description="Phosphothreonine; by autocatalysis" evidence="2">
    <location>
        <position position="352"/>
    </location>
</feature>
<feature type="modified residue" description="Phosphoserine; by MAPK13 and CDK1" evidence="2">
    <location>
        <position position="358"/>
    </location>
</feature>
<feature type="modified residue" description="Phosphoserine" evidence="11">
    <location>
        <position position="365"/>
    </location>
</feature>
<feature type="modified residue" description="Phosphoserine" evidence="3">
    <location>
        <position position="391"/>
    </location>
</feature>
<feature type="modified residue" description="Phosphoserine; by AMPK" evidence="2">
    <location>
        <position position="397"/>
    </location>
</feature>
<feature type="modified residue" description="Phosphoserine" evidence="2">
    <location>
        <position position="434"/>
    </location>
</feature>
<feature type="modified residue" description="Phosphoserine" evidence="11">
    <location>
        <position position="444"/>
    </location>
</feature>
<feature type="modified residue" description="Phosphoserine" evidence="11">
    <location>
        <position position="469"/>
    </location>
</feature>
<feature type="modified residue" description="Phosphoserine" evidence="11">
    <location>
        <position position="473"/>
    </location>
</feature>
<feature type="modified residue" description="Phosphoserine" evidence="11">
    <location>
        <position position="476"/>
    </location>
</feature>
<feature type="modified residue" description="Phosphoserine; by PKA" evidence="6">
    <location>
        <position position="499"/>
    </location>
</feature>
<protein>
    <recommendedName>
        <fullName>Eukaryotic elongation factor 2 kinase</fullName>
        <shortName>eEF-2 kinase</shortName>
        <shortName>eEF-2K</shortName>
        <ecNumber evidence="8">2.7.11.20</ecNumber>
    </recommendedName>
    <alternativeName>
        <fullName>Calcium/calmodulin-dependent eukaryotic elongation factor 2 kinase</fullName>
    </alternativeName>
</protein>
<evidence type="ECO:0000250" key="1"/>
<evidence type="ECO:0000250" key="2">
    <source>
        <dbReference type="UniProtKB" id="O00418"/>
    </source>
</evidence>
<evidence type="ECO:0000250" key="3">
    <source>
        <dbReference type="UniProtKB" id="O08796"/>
    </source>
</evidence>
<evidence type="ECO:0000255" key="4">
    <source>
        <dbReference type="PROSITE-ProRule" id="PRU00501"/>
    </source>
</evidence>
<evidence type="ECO:0000256" key="5">
    <source>
        <dbReference type="SAM" id="MobiDB-lite"/>
    </source>
</evidence>
<evidence type="ECO:0000269" key="6">
    <source>
    </source>
</evidence>
<evidence type="ECO:0000269" key="7">
    <source>
    </source>
</evidence>
<evidence type="ECO:0000269" key="8">
    <source>
    </source>
</evidence>
<evidence type="ECO:0000305" key="9"/>
<evidence type="ECO:0000312" key="10">
    <source>
        <dbReference type="RGD" id="2538"/>
    </source>
</evidence>
<evidence type="ECO:0007744" key="11">
    <source>
    </source>
</evidence>
<organism>
    <name type="scientific">Rattus norvegicus</name>
    <name type="common">Rat</name>
    <dbReference type="NCBI Taxonomy" id="10116"/>
    <lineage>
        <taxon>Eukaryota</taxon>
        <taxon>Metazoa</taxon>
        <taxon>Chordata</taxon>
        <taxon>Craniata</taxon>
        <taxon>Vertebrata</taxon>
        <taxon>Euteleostomi</taxon>
        <taxon>Mammalia</taxon>
        <taxon>Eutheria</taxon>
        <taxon>Euarchontoglires</taxon>
        <taxon>Glires</taxon>
        <taxon>Rodentia</taxon>
        <taxon>Myomorpha</taxon>
        <taxon>Muroidea</taxon>
        <taxon>Muridae</taxon>
        <taxon>Murinae</taxon>
        <taxon>Rattus</taxon>
    </lineage>
</organism>
<dbReference type="EC" id="2.7.11.20" evidence="8"/>
<dbReference type="EMBL" id="X96426">
    <property type="protein sequence ID" value="CAA65286.1"/>
    <property type="molecule type" value="mRNA"/>
</dbReference>
<dbReference type="EMBL" id="U93849">
    <property type="protein sequence ID" value="AAB58272.1"/>
    <property type="molecule type" value="mRNA"/>
</dbReference>
<dbReference type="RefSeq" id="NP_037079.1">
    <property type="nucleotide sequence ID" value="NM_012947.3"/>
</dbReference>
<dbReference type="RefSeq" id="XP_006230218.1">
    <property type="nucleotide sequence ID" value="XM_006230156.3"/>
</dbReference>
<dbReference type="RefSeq" id="XP_006230219.1">
    <property type="nucleotide sequence ID" value="XM_006230157.5"/>
</dbReference>
<dbReference type="RefSeq" id="XP_006230220.1">
    <property type="nucleotide sequence ID" value="XM_006230158.5"/>
</dbReference>
<dbReference type="RefSeq" id="XP_063137875.1">
    <property type="nucleotide sequence ID" value="XM_063281805.1"/>
</dbReference>
<dbReference type="SMR" id="P70531"/>
<dbReference type="ELM" id="P70531"/>
<dbReference type="FunCoup" id="P70531">
    <property type="interactions" value="492"/>
</dbReference>
<dbReference type="STRING" id="10116.ENSRNOP00000022726"/>
<dbReference type="BindingDB" id="P70531"/>
<dbReference type="ChEMBL" id="CHEMBL3325307"/>
<dbReference type="GlyGen" id="P70531">
    <property type="glycosylation" value="1 site, 1 O-linked glycan (1 site)"/>
</dbReference>
<dbReference type="iPTMnet" id="P70531"/>
<dbReference type="PhosphoSitePlus" id="P70531"/>
<dbReference type="PaxDb" id="10116-ENSRNOP00000022726"/>
<dbReference type="Ensembl" id="ENSRNOT00000022726.6">
    <property type="protein sequence ID" value="ENSRNOP00000022726.3"/>
    <property type="gene ID" value="ENSRNOG00000016448.8"/>
</dbReference>
<dbReference type="GeneID" id="25435"/>
<dbReference type="KEGG" id="rno:25435"/>
<dbReference type="UCSC" id="RGD:2538">
    <property type="organism name" value="rat"/>
</dbReference>
<dbReference type="AGR" id="RGD:2538"/>
<dbReference type="CTD" id="29904"/>
<dbReference type="RGD" id="2538">
    <property type="gene designation" value="Eef2k"/>
</dbReference>
<dbReference type="eggNOG" id="ENOG502QVA3">
    <property type="taxonomic scope" value="Eukaryota"/>
</dbReference>
<dbReference type="GeneTree" id="ENSGT00940000157839"/>
<dbReference type="HOGENOM" id="CLU_382143_0_0_1"/>
<dbReference type="InParanoid" id="P70531"/>
<dbReference type="OMA" id="CLQMEAK"/>
<dbReference type="OrthoDB" id="38383at9989"/>
<dbReference type="PhylomeDB" id="P70531"/>
<dbReference type="TreeFam" id="TF316085"/>
<dbReference type="BRENDA" id="2.7.11.20">
    <property type="organism ID" value="5301"/>
</dbReference>
<dbReference type="Reactome" id="R-RNO-166208">
    <property type="pathway name" value="mTORC1-mediated signalling"/>
</dbReference>
<dbReference type="PRO" id="PR:P70531"/>
<dbReference type="Proteomes" id="UP000002494">
    <property type="component" value="Chromosome 1"/>
</dbReference>
<dbReference type="Bgee" id="ENSRNOG00000016448">
    <property type="expression patterns" value="Expressed in skeletal muscle tissue and 20 other cell types or tissues"/>
</dbReference>
<dbReference type="GO" id="GO:0043197">
    <property type="term" value="C:dendritic spine"/>
    <property type="evidence" value="ECO:0000314"/>
    <property type="project" value="SynGO-UCL"/>
</dbReference>
<dbReference type="GO" id="GO:0098978">
    <property type="term" value="C:glutamatergic synapse"/>
    <property type="evidence" value="ECO:0000314"/>
    <property type="project" value="SynGO"/>
</dbReference>
<dbReference type="GO" id="GO:0014069">
    <property type="term" value="C:postsynaptic density"/>
    <property type="evidence" value="ECO:0000314"/>
    <property type="project" value="SynGO"/>
</dbReference>
<dbReference type="GO" id="GO:0005524">
    <property type="term" value="F:ATP binding"/>
    <property type="evidence" value="ECO:0007669"/>
    <property type="project" value="UniProtKB-KW"/>
</dbReference>
<dbReference type="GO" id="GO:0005509">
    <property type="term" value="F:calcium ion binding"/>
    <property type="evidence" value="ECO:0007669"/>
    <property type="project" value="InterPro"/>
</dbReference>
<dbReference type="GO" id="GO:0005516">
    <property type="term" value="F:calmodulin binding"/>
    <property type="evidence" value="ECO:0000250"/>
    <property type="project" value="UniProtKB"/>
</dbReference>
<dbReference type="GO" id="GO:0004686">
    <property type="term" value="F:elongation factor-2 kinase activity"/>
    <property type="evidence" value="ECO:0000315"/>
    <property type="project" value="RGD"/>
</dbReference>
<dbReference type="GO" id="GO:0071454">
    <property type="term" value="P:cellular response to anoxia"/>
    <property type="evidence" value="ECO:0000270"/>
    <property type="project" value="RGD"/>
</dbReference>
<dbReference type="GO" id="GO:1990416">
    <property type="term" value="P:cellular response to brain-derived neurotrophic factor stimulus"/>
    <property type="evidence" value="ECO:0000270"/>
    <property type="project" value="RGD"/>
</dbReference>
<dbReference type="GO" id="GO:0071277">
    <property type="term" value="P:cellular response to calcium ion"/>
    <property type="evidence" value="ECO:0000270"/>
    <property type="project" value="RGD"/>
</dbReference>
<dbReference type="GO" id="GO:0071320">
    <property type="term" value="P:cellular response to cAMP"/>
    <property type="evidence" value="ECO:0000270"/>
    <property type="project" value="RGD"/>
</dbReference>
<dbReference type="GO" id="GO:0032869">
    <property type="term" value="P:cellular response to insulin stimulus"/>
    <property type="evidence" value="ECO:0000270"/>
    <property type="project" value="RGD"/>
</dbReference>
<dbReference type="GO" id="GO:0031037">
    <property type="term" value="P:myosin II filament disassembly"/>
    <property type="evidence" value="ECO:0000318"/>
    <property type="project" value="GO_Central"/>
</dbReference>
<dbReference type="GO" id="GO:0043066">
    <property type="term" value="P:negative regulation of apoptotic process"/>
    <property type="evidence" value="ECO:0000315"/>
    <property type="project" value="RGD"/>
</dbReference>
<dbReference type="GO" id="GO:0061003">
    <property type="term" value="P:positive regulation of dendritic spine morphogenesis"/>
    <property type="evidence" value="ECO:0000315"/>
    <property type="project" value="RGD"/>
</dbReference>
<dbReference type="GO" id="GO:0045807">
    <property type="term" value="P:positive regulation of endocytosis"/>
    <property type="evidence" value="ECO:0000315"/>
    <property type="project" value="RGD"/>
</dbReference>
<dbReference type="GO" id="GO:0051965">
    <property type="term" value="P:positive regulation of synapse assembly"/>
    <property type="evidence" value="ECO:0000315"/>
    <property type="project" value="RGD"/>
</dbReference>
<dbReference type="GO" id="GO:0046777">
    <property type="term" value="P:protein autophosphorylation"/>
    <property type="evidence" value="ECO:0000250"/>
    <property type="project" value="UniProtKB"/>
</dbReference>
<dbReference type="GO" id="GO:0140245">
    <property type="term" value="P:regulation of translation at postsynapse"/>
    <property type="evidence" value="ECO:0000314"/>
    <property type="project" value="SynGO"/>
</dbReference>
<dbReference type="GO" id="GO:0002931">
    <property type="term" value="P:response to ischemia"/>
    <property type="evidence" value="ECO:0000270"/>
    <property type="project" value="RGD"/>
</dbReference>
<dbReference type="GO" id="GO:1990637">
    <property type="term" value="P:response to prolactin"/>
    <property type="evidence" value="ECO:0000270"/>
    <property type="project" value="RGD"/>
</dbReference>
<dbReference type="CDD" id="cd16967">
    <property type="entry name" value="Alpha_kinase_eEF2K"/>
    <property type="match status" value="1"/>
</dbReference>
<dbReference type="FunFam" id="1.25.40.10:FF:000229">
    <property type="entry name" value="Eukaryotic elongation factor 2 kinase"/>
    <property type="match status" value="1"/>
</dbReference>
<dbReference type="FunFam" id="3.20.200.10:FF:000002">
    <property type="entry name" value="Eukaryotic elongation factor 2 kinase"/>
    <property type="match status" value="1"/>
</dbReference>
<dbReference type="FunFam" id="3.30.200.20:FF:000230">
    <property type="entry name" value="Eukaryotic elongation factor 2 kinase"/>
    <property type="match status" value="1"/>
</dbReference>
<dbReference type="FunFam" id="3.30.200.20:FF:000336">
    <property type="entry name" value="Eukaryotic elongation factor 2 kinase"/>
    <property type="match status" value="1"/>
</dbReference>
<dbReference type="Gene3D" id="3.20.200.10">
    <property type="entry name" value="MHCK/EF2 kinase"/>
    <property type="match status" value="1"/>
</dbReference>
<dbReference type="Gene3D" id="3.30.200.20">
    <property type="entry name" value="Phosphorylase Kinase, domain 1"/>
    <property type="match status" value="2"/>
</dbReference>
<dbReference type="Gene3D" id="1.25.40.10">
    <property type="entry name" value="Tetratricopeptide repeat domain"/>
    <property type="match status" value="1"/>
</dbReference>
<dbReference type="InterPro" id="IPR004166">
    <property type="entry name" value="a-kinase_dom"/>
</dbReference>
<dbReference type="InterPro" id="IPR051852">
    <property type="entry name" value="Alpha-type_PK"/>
</dbReference>
<dbReference type="InterPro" id="IPR017400">
    <property type="entry name" value="eEF-2K"/>
</dbReference>
<dbReference type="InterPro" id="IPR047588">
    <property type="entry name" value="eEF2K_a_kinase_dom"/>
</dbReference>
<dbReference type="InterPro" id="IPR011009">
    <property type="entry name" value="Kinase-like_dom_sf"/>
</dbReference>
<dbReference type="InterPro" id="IPR011990">
    <property type="entry name" value="TPR-like_helical_dom_sf"/>
</dbReference>
<dbReference type="PANTHER" id="PTHR45992:SF2">
    <property type="entry name" value="EUKARYOTIC ELONGATION FACTOR 2 KINASE"/>
    <property type="match status" value="1"/>
</dbReference>
<dbReference type="PANTHER" id="PTHR45992">
    <property type="entry name" value="EUKARYOTIC ELONGATION FACTOR 2 KINASE-RELATED"/>
    <property type="match status" value="1"/>
</dbReference>
<dbReference type="Pfam" id="PF02816">
    <property type="entry name" value="Alpha_kinase"/>
    <property type="match status" value="1"/>
</dbReference>
<dbReference type="PIRSF" id="PIRSF038139">
    <property type="entry name" value="Elongation_factor_2_kinase"/>
    <property type="match status" value="1"/>
</dbReference>
<dbReference type="SMART" id="SM00811">
    <property type="entry name" value="Alpha_kinase"/>
    <property type="match status" value="1"/>
</dbReference>
<dbReference type="SUPFAM" id="SSF81901">
    <property type="entry name" value="HCP-like"/>
    <property type="match status" value="1"/>
</dbReference>
<dbReference type="SUPFAM" id="SSF56112">
    <property type="entry name" value="Protein kinase-like (PK-like)"/>
    <property type="match status" value="1"/>
</dbReference>
<dbReference type="PROSITE" id="PS51158">
    <property type="entry name" value="ALPHA_KINASE"/>
    <property type="match status" value="1"/>
</dbReference>
<proteinExistence type="evidence at protein level"/>
<accession>P70531</accession>
<accession>O09089</accession>
<reference key="1">
    <citation type="journal article" date="1996" name="J. Biol. Chem.">
        <title>Cloning and expression of cDNA encoding protein synthesis elongation factor-2 kinase.</title>
        <authorList>
            <person name="Redpath N.T."/>
            <person name="Price N.T."/>
            <person name="Proud C.G."/>
        </authorList>
    </citation>
    <scope>NUCLEOTIDE SEQUENCE [MRNA]</scope>
    <scope>TISSUE SPECIFICITY</scope>
    <scope>CATALYTIC ACTIVITY</scope>
    <scope>ACTIVITY REGULATION</scope>
    <source>
        <tissue>Skeletal muscle</tissue>
    </source>
</reference>
<reference key="2">
    <citation type="journal article" date="1997" name="Proc. Natl. Acad. Sci. U.S.A.">
        <title>Identification of a new class of protein kinases represented by eukaryotic elongation factor-2 kinase.</title>
        <authorList>
            <person name="Ryazanov A.G."/>
            <person name="Ward M.D."/>
            <person name="Mendola C.E."/>
            <person name="Pavur K.S."/>
            <person name="Dorovkov M.V."/>
            <person name="Wiedmann M."/>
            <person name="Erdjument-Bromage H."/>
            <person name="Tempst P."/>
            <person name="Parmer T.G."/>
            <person name="Prostko C.R."/>
            <person name="Germino F.J."/>
            <person name="Hait W.N."/>
        </authorList>
    </citation>
    <scope>NUCLEOTIDE SEQUENCE [MRNA]</scope>
    <source>
        <strain>New England Deaconess Hospital</strain>
        <tissue>Pheochromocytoma</tissue>
    </source>
</reference>
<reference key="3">
    <citation type="journal article" date="1993" name="J. Biol. Chem.">
        <title>Purification and characterization of calmodulin-dependent protein kinase III from rabbit reticulocytes and rat pancreas.</title>
        <authorList>
            <person name="Mitsui K."/>
            <person name="Brady M."/>
            <person name="Palfrey H.C."/>
            <person name="Nairn A.C."/>
        </authorList>
    </citation>
    <scope>AUTOPHOSPHORYLATION</scope>
</reference>
<reference key="4">
    <citation type="journal article" date="2001" name="Biochem. J.">
        <title>Phosphorylation of elongation factor-2 kinase on serine 499 by cAMP-dependent protein kinase induces Ca2+/calmodulin-independent activity.</title>
        <authorList>
            <person name="Diggle T.A."/>
            <person name="Subkhankulova T."/>
            <person name="Lilley K.S."/>
            <person name="Shikotra N."/>
            <person name="Willis A.E."/>
            <person name="Redpath N.T."/>
        </authorList>
    </citation>
    <scope>PHOSPHORYLATION AT SER-499 BY PKA</scope>
</reference>
<reference key="5">
    <citation type="journal article" date="2012" name="Nat. Commun.">
        <title>Quantitative maps of protein phosphorylation sites across 14 different rat organs and tissues.</title>
        <authorList>
            <person name="Lundby A."/>
            <person name="Secher A."/>
            <person name="Lage K."/>
            <person name="Nordsborg N.B."/>
            <person name="Dmytriyev A."/>
            <person name="Lundby C."/>
            <person name="Olsen J.V."/>
        </authorList>
    </citation>
    <scope>PHOSPHORYLATION [LARGE SCALE ANALYSIS] AT SER-73; THR-347; SER-365; SER-444; SER-469; SER-473 AND SER-476</scope>
    <scope>IDENTIFICATION BY MASS SPECTROMETRY [LARGE SCALE ANALYSIS]</scope>
</reference>
<sequence>MADEDLIFRLEGVDGGGSSGAGRHGDSDTDSDDDEGYFICPITDDHMSNQNVNSKGQGYYNNLLKTECGSTGSPASSFHFKEAWKHAIEKAKHMPDPWAEFHLEDIATEHATRHRYNAVTGEWLKDEVLIKMASQPFGRGAMRECFRTKKLSNFLHAQHWKGASNYVAKRYLEPVDRSVYFEDVQLQMEAKLWGEEYNRHKPPKQVDIMQMCIIELKDRQGQPLFHLEHYIEGKYIKYNSNSGFVRDDNIRLTPQAFSHFTFERSGHQLIVVDIQGVGDLYTDPQIHTEKGTDFGDGNLGVRGMALFFYSHACNRICQSMGLAPFDLSPREQDAVNQSTKLLQSAKTILRGTEEKCGSPRIRTLSGSRPPLLLRLSENSGDENMSDVTFDSLPSSPSSATPHSQKLDHLHWPVFGDLDNMGPRDHDRMDNHRDSENSGDSGYPSEKRSDLDDPEPREHGHSNGNRRPESDEDSLGSSGRVCVETWNLLNPSRLHLPRPSAVALEVQRLNALDLGRKIGKSVLGKVHLAMVRYHEGGRFCEKDEEWDQESAIFHLEHAADLGELEAIVGLGLMYSQLPHHILADVSLEETEENKTKGFDYLLKAAEAGDRQSMILVARAFDTGLNLSPDRCQDWSEALHWYNTALETTDCDEGGEYDGIQDEPQYALLAREAEMLLTGGFGLDKNPQRSGDLYTQAAEAAMEAMKGRLANQYYEKAEEAWAQMEE</sequence>